<keyword id="KW-0068">Autocatalytic cleavage</keyword>
<keyword id="KW-0963">Cytoplasm</keyword>
<keyword id="KW-0210">Decarboxylase</keyword>
<keyword id="KW-0456">Lyase</keyword>
<keyword id="KW-0566">Pantothenate biosynthesis</keyword>
<keyword id="KW-0670">Pyruvate</keyword>
<keyword id="KW-1185">Reference proteome</keyword>
<keyword id="KW-0704">Schiff base</keyword>
<keyword id="KW-0865">Zymogen</keyword>
<reference key="1">
    <citation type="submission" date="2008-04" db="EMBL/GenBank/DDBJ databases">
        <title>Complete sequence of chromosome of Exiguobacterium sibiricum 255-15.</title>
        <authorList>
            <consortium name="US DOE Joint Genome Institute"/>
            <person name="Copeland A."/>
            <person name="Lucas S."/>
            <person name="Lapidus A."/>
            <person name="Glavina del Rio T."/>
            <person name="Dalin E."/>
            <person name="Tice H."/>
            <person name="Bruce D."/>
            <person name="Goodwin L."/>
            <person name="Pitluck S."/>
            <person name="Kiss H."/>
            <person name="Chertkov O."/>
            <person name="Monk C."/>
            <person name="Brettin T."/>
            <person name="Detter J.C."/>
            <person name="Han C."/>
            <person name="Kuske C.R."/>
            <person name="Schmutz J."/>
            <person name="Larimer F."/>
            <person name="Land M."/>
            <person name="Hauser L."/>
            <person name="Kyrpides N."/>
            <person name="Mikhailova N."/>
            <person name="Vishnivetskaya T."/>
            <person name="Rodrigues D.F."/>
            <person name="Gilichinsky D."/>
            <person name="Tiedje J."/>
            <person name="Richardson P."/>
        </authorList>
    </citation>
    <scope>NUCLEOTIDE SEQUENCE [LARGE SCALE GENOMIC DNA]</scope>
    <source>
        <strain>DSM 17290 / CCUG 55495 / CIP 109462 / JCM 13490 / 255-15</strain>
    </source>
</reference>
<evidence type="ECO:0000255" key="1">
    <source>
        <dbReference type="HAMAP-Rule" id="MF_00446"/>
    </source>
</evidence>
<protein>
    <recommendedName>
        <fullName evidence="1">Aspartate 1-decarboxylase</fullName>
        <ecNumber evidence="1">4.1.1.11</ecNumber>
    </recommendedName>
    <alternativeName>
        <fullName evidence="1">Aspartate alpha-decarboxylase</fullName>
    </alternativeName>
    <component>
        <recommendedName>
            <fullName evidence="1">Aspartate 1-decarboxylase beta chain</fullName>
        </recommendedName>
    </component>
    <component>
        <recommendedName>
            <fullName evidence="1">Aspartate 1-decarboxylase alpha chain</fullName>
        </recommendedName>
    </component>
</protein>
<proteinExistence type="inferred from homology"/>
<name>PAND_EXIS2</name>
<organism>
    <name type="scientific">Exiguobacterium sibiricum (strain DSM 17290 / CCUG 55495 / CIP 109462 / JCM 13490 / 255-15)</name>
    <dbReference type="NCBI Taxonomy" id="262543"/>
    <lineage>
        <taxon>Bacteria</taxon>
        <taxon>Bacillati</taxon>
        <taxon>Bacillota</taxon>
        <taxon>Bacilli</taxon>
        <taxon>Bacillales</taxon>
        <taxon>Bacillales Family XII. Incertae Sedis</taxon>
        <taxon>Exiguobacterium</taxon>
    </lineage>
</organism>
<sequence length="127" mass="13963">MLRTFMHAKLHKARVTEANLHYVGSITIDEDLLDAVGILENEKVQVTNNQNGARIETYAIKGARGSGVICLNGAAARHFQIGDEVIIMAYAQLTNEEIATHVPKVAVLDQENSIKQMLSQEIAHTIL</sequence>
<dbReference type="EC" id="4.1.1.11" evidence="1"/>
<dbReference type="EMBL" id="CP001022">
    <property type="protein sequence ID" value="ACB61230.1"/>
    <property type="molecule type" value="Genomic_DNA"/>
</dbReference>
<dbReference type="RefSeq" id="WP_012370648.1">
    <property type="nucleotide sequence ID" value="NC_010556.1"/>
</dbReference>
<dbReference type="SMR" id="B1YHQ7"/>
<dbReference type="STRING" id="262543.Exig_1778"/>
<dbReference type="KEGG" id="esi:Exig_1778"/>
<dbReference type="eggNOG" id="COG0853">
    <property type="taxonomic scope" value="Bacteria"/>
</dbReference>
<dbReference type="HOGENOM" id="CLU_115305_2_0_9"/>
<dbReference type="OrthoDB" id="9803983at2"/>
<dbReference type="UniPathway" id="UPA00028">
    <property type="reaction ID" value="UER00002"/>
</dbReference>
<dbReference type="Proteomes" id="UP000001681">
    <property type="component" value="Chromosome"/>
</dbReference>
<dbReference type="GO" id="GO:0005829">
    <property type="term" value="C:cytosol"/>
    <property type="evidence" value="ECO:0007669"/>
    <property type="project" value="TreeGrafter"/>
</dbReference>
<dbReference type="GO" id="GO:0004068">
    <property type="term" value="F:aspartate 1-decarboxylase activity"/>
    <property type="evidence" value="ECO:0007669"/>
    <property type="project" value="UniProtKB-UniRule"/>
</dbReference>
<dbReference type="GO" id="GO:0006523">
    <property type="term" value="P:alanine biosynthetic process"/>
    <property type="evidence" value="ECO:0007669"/>
    <property type="project" value="InterPro"/>
</dbReference>
<dbReference type="GO" id="GO:0015940">
    <property type="term" value="P:pantothenate biosynthetic process"/>
    <property type="evidence" value="ECO:0007669"/>
    <property type="project" value="UniProtKB-UniRule"/>
</dbReference>
<dbReference type="CDD" id="cd06919">
    <property type="entry name" value="Asp_decarbox"/>
    <property type="match status" value="1"/>
</dbReference>
<dbReference type="Gene3D" id="2.40.40.20">
    <property type="match status" value="1"/>
</dbReference>
<dbReference type="HAMAP" id="MF_00446">
    <property type="entry name" value="PanD"/>
    <property type="match status" value="1"/>
</dbReference>
<dbReference type="InterPro" id="IPR009010">
    <property type="entry name" value="Asp_de-COase-like_dom_sf"/>
</dbReference>
<dbReference type="InterPro" id="IPR003190">
    <property type="entry name" value="Asp_decarbox"/>
</dbReference>
<dbReference type="NCBIfam" id="TIGR00223">
    <property type="entry name" value="panD"/>
    <property type="match status" value="1"/>
</dbReference>
<dbReference type="PANTHER" id="PTHR21012">
    <property type="entry name" value="ASPARTATE 1-DECARBOXYLASE"/>
    <property type="match status" value="1"/>
</dbReference>
<dbReference type="PANTHER" id="PTHR21012:SF0">
    <property type="entry name" value="ASPARTATE 1-DECARBOXYLASE"/>
    <property type="match status" value="1"/>
</dbReference>
<dbReference type="Pfam" id="PF02261">
    <property type="entry name" value="Asp_decarbox"/>
    <property type="match status" value="1"/>
</dbReference>
<dbReference type="PIRSF" id="PIRSF006246">
    <property type="entry name" value="Asp_decarbox"/>
    <property type="match status" value="1"/>
</dbReference>
<dbReference type="SUPFAM" id="SSF50692">
    <property type="entry name" value="ADC-like"/>
    <property type="match status" value="1"/>
</dbReference>
<accession>B1YHQ7</accession>
<gene>
    <name evidence="1" type="primary">panD</name>
    <name type="ordered locus">Exig_1778</name>
</gene>
<feature type="chain" id="PRO_1000124821" description="Aspartate 1-decarboxylase beta chain" evidence="1">
    <location>
        <begin position="1"/>
        <end position="24"/>
    </location>
</feature>
<feature type="chain" id="PRO_1000124822" description="Aspartate 1-decarboxylase alpha chain" evidence="1">
    <location>
        <begin position="25"/>
        <end position="127"/>
    </location>
</feature>
<feature type="active site" description="Schiff-base intermediate with substrate; via pyruvic acid" evidence="1">
    <location>
        <position position="25"/>
    </location>
</feature>
<feature type="active site" description="Proton donor" evidence="1">
    <location>
        <position position="58"/>
    </location>
</feature>
<feature type="binding site" evidence="1">
    <location>
        <position position="57"/>
    </location>
    <ligand>
        <name>substrate</name>
    </ligand>
</feature>
<feature type="binding site" evidence="1">
    <location>
        <begin position="73"/>
        <end position="75"/>
    </location>
    <ligand>
        <name>substrate</name>
    </ligand>
</feature>
<feature type="modified residue" description="Pyruvic acid (Ser)" evidence="1">
    <location>
        <position position="25"/>
    </location>
</feature>
<comment type="function">
    <text evidence="1">Catalyzes the pyruvoyl-dependent decarboxylation of aspartate to produce beta-alanine.</text>
</comment>
<comment type="catalytic activity">
    <reaction evidence="1">
        <text>L-aspartate + H(+) = beta-alanine + CO2</text>
        <dbReference type="Rhea" id="RHEA:19497"/>
        <dbReference type="ChEBI" id="CHEBI:15378"/>
        <dbReference type="ChEBI" id="CHEBI:16526"/>
        <dbReference type="ChEBI" id="CHEBI:29991"/>
        <dbReference type="ChEBI" id="CHEBI:57966"/>
        <dbReference type="EC" id="4.1.1.11"/>
    </reaction>
</comment>
<comment type="cofactor">
    <cofactor evidence="1">
        <name>pyruvate</name>
        <dbReference type="ChEBI" id="CHEBI:15361"/>
    </cofactor>
    <text evidence="1">Binds 1 pyruvoyl group covalently per subunit.</text>
</comment>
<comment type="pathway">
    <text evidence="1">Cofactor biosynthesis; (R)-pantothenate biosynthesis; beta-alanine from L-aspartate: step 1/1.</text>
</comment>
<comment type="subunit">
    <text evidence="1">Heterooctamer of four alpha and four beta subunits.</text>
</comment>
<comment type="subcellular location">
    <subcellularLocation>
        <location evidence="1">Cytoplasm</location>
    </subcellularLocation>
</comment>
<comment type="PTM">
    <text evidence="1">Is synthesized initially as an inactive proenzyme, which is activated by self-cleavage at a specific serine bond to produce a beta-subunit with a hydroxyl group at its C-terminus and an alpha-subunit with a pyruvoyl group at its N-terminus.</text>
</comment>
<comment type="similarity">
    <text evidence="1">Belongs to the PanD family.</text>
</comment>